<evidence type="ECO:0000250" key="1"/>
<evidence type="ECO:0000250" key="2">
    <source>
        <dbReference type="UniProtKB" id="P00157"/>
    </source>
</evidence>
<evidence type="ECO:0000255" key="3">
    <source>
        <dbReference type="PROSITE-ProRule" id="PRU00967"/>
    </source>
</evidence>
<evidence type="ECO:0000255" key="4">
    <source>
        <dbReference type="PROSITE-ProRule" id="PRU00968"/>
    </source>
</evidence>
<sequence>MAINIRKTHPLLKIMNHALVDLPAPSNISLWWNFGSLLGLCLIIQILTGLFLAMHYTADISMAFSSVVHICRDVNYGWLIRNIHANGASLFFICVYLHIARGLYYGSYLYKETWNIGVILLFLLMATAFVGYVLPWGQMSFWGATVITNLLSAFPYIGDMLVQWIWGGFSVDNATLTRFFAFHFLLPFLILALTIIHLLFLHETGSNNPLGINSDADKISFHPYFSYKDLLGFFVMIFFLAVFALFMPNLLGDAENFIPANPLVTPPHIKPEWYFLFAYAILRSIPNKLGGVLALLFSIFILMLVPLLHTSKQRSTIFRPMTQIFFWLLVANSIILTWIGGQPVEQPFIMVGQIASISYFSLFLIIMPLTSWWENKILSLN</sequence>
<keyword id="KW-0249">Electron transport</keyword>
<keyword id="KW-0349">Heme</keyword>
<keyword id="KW-0408">Iron</keyword>
<keyword id="KW-0472">Membrane</keyword>
<keyword id="KW-0479">Metal-binding</keyword>
<keyword id="KW-0496">Mitochondrion</keyword>
<keyword id="KW-0999">Mitochondrion inner membrane</keyword>
<keyword id="KW-0679">Respiratory chain</keyword>
<keyword id="KW-0812">Transmembrane</keyword>
<keyword id="KW-1133">Transmembrane helix</keyword>
<keyword id="KW-0813">Transport</keyword>
<keyword id="KW-0830">Ubiquinone</keyword>
<accession>P34866</accession>
<name>CYB_CARPL</name>
<comment type="function">
    <text evidence="2">Component of the ubiquinol-cytochrome c reductase complex (complex III or cytochrome b-c1 complex) that is part of the mitochondrial respiratory chain. The b-c1 complex mediates electron transfer from ubiquinol to cytochrome c. Contributes to the generation of a proton gradient across the mitochondrial membrane that is then used for ATP synthesis.</text>
</comment>
<comment type="cofactor">
    <cofactor evidence="2">
        <name>heme b</name>
        <dbReference type="ChEBI" id="CHEBI:60344"/>
    </cofactor>
    <text evidence="2">Binds 2 heme b groups non-covalently.</text>
</comment>
<comment type="subunit">
    <text evidence="2">The cytochrome bc1 complex contains 3 respiratory subunits (MT-CYB, CYC1 and UQCRFS1), 2 core proteins (UQCRC1 and UQCRC2) and probably 6 low-molecular weight proteins.</text>
</comment>
<comment type="subcellular location">
    <subcellularLocation>
        <location evidence="2">Mitochondrion inner membrane</location>
        <topology evidence="2">Multi-pass membrane protein</topology>
    </subcellularLocation>
</comment>
<comment type="miscellaneous">
    <text evidence="1">Heme 1 (or BL or b562) is low-potential and absorbs at about 562 nm, and heme 2 (or BH or b566) is high-potential and absorbs at about 566 nm.</text>
</comment>
<comment type="similarity">
    <text evidence="3 4">Belongs to the cytochrome b family.</text>
</comment>
<comment type="caution">
    <text evidence="2">The full-length protein contains only eight transmembrane helices, not nine as predicted by bioinformatics tools.</text>
</comment>
<geneLocation type="mitochondrion"/>
<reference key="1">
    <citation type="journal article" date="1992" name="Nature">
        <title>Rates of mitochondrial DNA evolution in sharks are slow compared with mammals.</title>
        <authorList>
            <person name="Martin A.P."/>
            <person name="Naylor G.J.P."/>
            <person name="Palumbi S.R."/>
        </authorList>
    </citation>
    <scope>NUCLEOTIDE SEQUENCE [GENOMIC DNA]</scope>
</reference>
<protein>
    <recommendedName>
        <fullName>Cytochrome b</fullName>
    </recommendedName>
    <alternativeName>
        <fullName>Complex III subunit 3</fullName>
    </alternativeName>
    <alternativeName>
        <fullName>Complex III subunit III</fullName>
    </alternativeName>
    <alternativeName>
        <fullName>Cytochrome b-c1 complex subunit 3</fullName>
    </alternativeName>
    <alternativeName>
        <fullName>Ubiquinol-cytochrome-c reductase complex cytochrome b subunit</fullName>
    </alternativeName>
</protein>
<proteinExistence type="inferred from homology"/>
<gene>
    <name type="primary">mt-cyb</name>
    <name type="synonym">cob</name>
    <name type="synonym">cytb</name>
    <name type="synonym">mtcyb</name>
</gene>
<dbReference type="EMBL" id="L08032">
    <property type="protein sequence ID" value="AAA31703.1"/>
    <property type="molecule type" value="Genomic_DNA"/>
</dbReference>
<dbReference type="SMR" id="P34866"/>
<dbReference type="GO" id="GO:0005743">
    <property type="term" value="C:mitochondrial inner membrane"/>
    <property type="evidence" value="ECO:0007669"/>
    <property type="project" value="UniProtKB-SubCell"/>
</dbReference>
<dbReference type="GO" id="GO:0045275">
    <property type="term" value="C:respiratory chain complex III"/>
    <property type="evidence" value="ECO:0007669"/>
    <property type="project" value="InterPro"/>
</dbReference>
<dbReference type="GO" id="GO:0046872">
    <property type="term" value="F:metal ion binding"/>
    <property type="evidence" value="ECO:0007669"/>
    <property type="project" value="UniProtKB-KW"/>
</dbReference>
<dbReference type="GO" id="GO:0008121">
    <property type="term" value="F:ubiquinol-cytochrome-c reductase activity"/>
    <property type="evidence" value="ECO:0007669"/>
    <property type="project" value="InterPro"/>
</dbReference>
<dbReference type="GO" id="GO:0006122">
    <property type="term" value="P:mitochondrial electron transport, ubiquinol to cytochrome c"/>
    <property type="evidence" value="ECO:0007669"/>
    <property type="project" value="TreeGrafter"/>
</dbReference>
<dbReference type="CDD" id="cd00290">
    <property type="entry name" value="cytochrome_b_C"/>
    <property type="match status" value="1"/>
</dbReference>
<dbReference type="CDD" id="cd00284">
    <property type="entry name" value="Cytochrome_b_N"/>
    <property type="match status" value="1"/>
</dbReference>
<dbReference type="FunFam" id="1.20.810.10:FF:000002">
    <property type="entry name" value="Cytochrome b"/>
    <property type="match status" value="1"/>
</dbReference>
<dbReference type="Gene3D" id="1.20.810.10">
    <property type="entry name" value="Cytochrome Bc1 Complex, Chain C"/>
    <property type="match status" value="1"/>
</dbReference>
<dbReference type="InterPro" id="IPR005798">
    <property type="entry name" value="Cyt_b/b6_C"/>
</dbReference>
<dbReference type="InterPro" id="IPR036150">
    <property type="entry name" value="Cyt_b/b6_C_sf"/>
</dbReference>
<dbReference type="InterPro" id="IPR005797">
    <property type="entry name" value="Cyt_b/b6_N"/>
</dbReference>
<dbReference type="InterPro" id="IPR027387">
    <property type="entry name" value="Cytb/b6-like_sf"/>
</dbReference>
<dbReference type="InterPro" id="IPR030689">
    <property type="entry name" value="Cytochrome_b"/>
</dbReference>
<dbReference type="InterPro" id="IPR048260">
    <property type="entry name" value="Cytochrome_b_C_euk/bac"/>
</dbReference>
<dbReference type="InterPro" id="IPR048259">
    <property type="entry name" value="Cytochrome_b_N_euk/bac"/>
</dbReference>
<dbReference type="InterPro" id="IPR016174">
    <property type="entry name" value="Di-haem_cyt_TM"/>
</dbReference>
<dbReference type="PANTHER" id="PTHR19271">
    <property type="entry name" value="CYTOCHROME B"/>
    <property type="match status" value="1"/>
</dbReference>
<dbReference type="PANTHER" id="PTHR19271:SF16">
    <property type="entry name" value="CYTOCHROME B"/>
    <property type="match status" value="1"/>
</dbReference>
<dbReference type="Pfam" id="PF00032">
    <property type="entry name" value="Cytochrom_B_C"/>
    <property type="match status" value="1"/>
</dbReference>
<dbReference type="Pfam" id="PF00033">
    <property type="entry name" value="Cytochrome_B"/>
    <property type="match status" value="1"/>
</dbReference>
<dbReference type="PIRSF" id="PIRSF038885">
    <property type="entry name" value="COB"/>
    <property type="match status" value="1"/>
</dbReference>
<dbReference type="SUPFAM" id="SSF81648">
    <property type="entry name" value="a domain/subunit of cytochrome bc1 complex (Ubiquinol-cytochrome c reductase)"/>
    <property type="match status" value="1"/>
</dbReference>
<dbReference type="SUPFAM" id="SSF81342">
    <property type="entry name" value="Transmembrane di-heme cytochromes"/>
    <property type="match status" value="1"/>
</dbReference>
<dbReference type="PROSITE" id="PS51003">
    <property type="entry name" value="CYTB_CTER"/>
    <property type="match status" value="1"/>
</dbReference>
<dbReference type="PROSITE" id="PS51002">
    <property type="entry name" value="CYTB_NTER"/>
    <property type="match status" value="1"/>
</dbReference>
<feature type="chain" id="PRO_0000060735" description="Cytochrome b">
    <location>
        <begin position="1"/>
        <end position="381"/>
    </location>
</feature>
<feature type="transmembrane region" description="Helical" evidence="2">
    <location>
        <begin position="34"/>
        <end position="54"/>
    </location>
</feature>
<feature type="transmembrane region" description="Helical" evidence="2">
    <location>
        <begin position="78"/>
        <end position="99"/>
    </location>
</feature>
<feature type="transmembrane region" description="Helical" evidence="2">
    <location>
        <begin position="114"/>
        <end position="134"/>
    </location>
</feature>
<feature type="transmembrane region" description="Helical" evidence="2">
    <location>
        <begin position="179"/>
        <end position="199"/>
    </location>
</feature>
<feature type="transmembrane region" description="Helical" evidence="2">
    <location>
        <begin position="227"/>
        <end position="247"/>
    </location>
</feature>
<feature type="transmembrane region" description="Helical" evidence="2">
    <location>
        <begin position="289"/>
        <end position="309"/>
    </location>
</feature>
<feature type="transmembrane region" description="Helical" evidence="2">
    <location>
        <begin position="321"/>
        <end position="341"/>
    </location>
</feature>
<feature type="transmembrane region" description="Helical" evidence="2">
    <location>
        <begin position="348"/>
        <end position="368"/>
    </location>
</feature>
<feature type="binding site" description="axial binding residue" evidence="2">
    <location>
        <position position="84"/>
    </location>
    <ligand>
        <name>heme b</name>
        <dbReference type="ChEBI" id="CHEBI:60344"/>
        <label>b562</label>
    </ligand>
    <ligandPart>
        <name>Fe</name>
        <dbReference type="ChEBI" id="CHEBI:18248"/>
    </ligandPart>
</feature>
<feature type="binding site" description="axial binding residue" evidence="2">
    <location>
        <position position="98"/>
    </location>
    <ligand>
        <name>heme b</name>
        <dbReference type="ChEBI" id="CHEBI:60344"/>
        <label>b566</label>
    </ligand>
    <ligandPart>
        <name>Fe</name>
        <dbReference type="ChEBI" id="CHEBI:18248"/>
    </ligandPart>
</feature>
<feature type="binding site" description="axial binding residue" evidence="2">
    <location>
        <position position="183"/>
    </location>
    <ligand>
        <name>heme b</name>
        <dbReference type="ChEBI" id="CHEBI:60344"/>
        <label>b562</label>
    </ligand>
    <ligandPart>
        <name>Fe</name>
        <dbReference type="ChEBI" id="CHEBI:18248"/>
    </ligandPart>
</feature>
<feature type="binding site" description="axial binding residue" evidence="2">
    <location>
        <position position="197"/>
    </location>
    <ligand>
        <name>heme b</name>
        <dbReference type="ChEBI" id="CHEBI:60344"/>
        <label>b566</label>
    </ligand>
    <ligandPart>
        <name>Fe</name>
        <dbReference type="ChEBI" id="CHEBI:18248"/>
    </ligandPart>
</feature>
<feature type="binding site" evidence="2">
    <location>
        <position position="202"/>
    </location>
    <ligand>
        <name>a ubiquinone</name>
        <dbReference type="ChEBI" id="CHEBI:16389"/>
    </ligand>
</feature>
<organism>
    <name type="scientific">Carcharhinus plumbeus</name>
    <name type="common">Sandbar shark</name>
    <name type="synonym">Squalus plumbeus</name>
    <dbReference type="NCBI Taxonomy" id="7808"/>
    <lineage>
        <taxon>Eukaryota</taxon>
        <taxon>Metazoa</taxon>
        <taxon>Chordata</taxon>
        <taxon>Craniata</taxon>
        <taxon>Vertebrata</taxon>
        <taxon>Chondrichthyes</taxon>
        <taxon>Elasmobranchii</taxon>
        <taxon>Galeomorphii</taxon>
        <taxon>Galeoidea</taxon>
        <taxon>Carcharhiniformes</taxon>
        <taxon>Carcharhinidae</taxon>
        <taxon>Carcharhinus</taxon>
    </lineage>
</organism>